<feature type="chain" id="PRO_0000100855" description="Phosphoribosylaminoimidazole-succinocarboxamide synthase">
    <location>
        <begin position="1"/>
        <end position="236"/>
    </location>
</feature>
<comment type="catalytic activity">
    <reaction evidence="1">
        <text>5-amino-1-(5-phospho-D-ribosyl)imidazole-4-carboxylate + L-aspartate + ATP = (2S)-2-[5-amino-1-(5-phospho-beta-D-ribosyl)imidazole-4-carboxamido]succinate + ADP + phosphate + 2 H(+)</text>
        <dbReference type="Rhea" id="RHEA:22628"/>
        <dbReference type="ChEBI" id="CHEBI:15378"/>
        <dbReference type="ChEBI" id="CHEBI:29991"/>
        <dbReference type="ChEBI" id="CHEBI:30616"/>
        <dbReference type="ChEBI" id="CHEBI:43474"/>
        <dbReference type="ChEBI" id="CHEBI:58443"/>
        <dbReference type="ChEBI" id="CHEBI:77657"/>
        <dbReference type="ChEBI" id="CHEBI:456216"/>
        <dbReference type="EC" id="6.3.2.6"/>
    </reaction>
</comment>
<comment type="pathway">
    <text evidence="1">Purine metabolism; IMP biosynthesis via de novo pathway; 5-amino-1-(5-phospho-D-ribosyl)imidazole-4-carboxamide from 5-amino-1-(5-phospho-D-ribosyl)imidazole-4-carboxylate: step 1/2.</text>
</comment>
<comment type="similarity">
    <text evidence="1">Belongs to the SAICAR synthetase family.</text>
</comment>
<accession>Q9I4W0</accession>
<gene>
    <name evidence="1" type="primary">purC</name>
    <name type="ordered locus">PA1013</name>
</gene>
<protein>
    <recommendedName>
        <fullName evidence="1">Phosphoribosylaminoimidazole-succinocarboxamide synthase</fullName>
        <ecNumber evidence="1">6.3.2.6</ecNumber>
    </recommendedName>
    <alternativeName>
        <fullName evidence="1">SAICAR synthetase</fullName>
    </alternativeName>
</protein>
<keyword id="KW-0067">ATP-binding</keyword>
<keyword id="KW-0436">Ligase</keyword>
<keyword id="KW-0547">Nucleotide-binding</keyword>
<keyword id="KW-0658">Purine biosynthesis</keyword>
<keyword id="KW-1185">Reference proteome</keyword>
<reference key="1">
    <citation type="journal article" date="2000" name="Nature">
        <title>Complete genome sequence of Pseudomonas aeruginosa PAO1, an opportunistic pathogen.</title>
        <authorList>
            <person name="Stover C.K."/>
            <person name="Pham X.-Q.T."/>
            <person name="Erwin A.L."/>
            <person name="Mizoguchi S.D."/>
            <person name="Warrener P."/>
            <person name="Hickey M.J."/>
            <person name="Brinkman F.S.L."/>
            <person name="Hufnagle W.O."/>
            <person name="Kowalik D.J."/>
            <person name="Lagrou M."/>
            <person name="Garber R.L."/>
            <person name="Goltry L."/>
            <person name="Tolentino E."/>
            <person name="Westbrock-Wadman S."/>
            <person name="Yuan Y."/>
            <person name="Brody L.L."/>
            <person name="Coulter S.N."/>
            <person name="Folger K.R."/>
            <person name="Kas A."/>
            <person name="Larbig K."/>
            <person name="Lim R.M."/>
            <person name="Smith K.A."/>
            <person name="Spencer D.H."/>
            <person name="Wong G.K.-S."/>
            <person name="Wu Z."/>
            <person name="Paulsen I.T."/>
            <person name="Reizer J."/>
            <person name="Saier M.H. Jr."/>
            <person name="Hancock R.E.W."/>
            <person name="Lory S."/>
            <person name="Olson M.V."/>
        </authorList>
    </citation>
    <scope>NUCLEOTIDE SEQUENCE [LARGE SCALE GENOMIC DNA]</scope>
    <source>
        <strain>ATCC 15692 / DSM 22644 / CIP 104116 / JCM 14847 / LMG 12228 / 1C / PRS 101 / PAO1</strain>
    </source>
</reference>
<proteinExistence type="inferred from homology"/>
<sequence length="236" mass="26831">MEKREELYRGKAKSVYQTDDADRLILLFRNDTSAFDGKRIEQLDRKGAVNNKFNAFIMQKLEAAGIPTQFDKLLSDTECLVKKLDMIPVECVVRNFAAGSLVRRLGVEEGIALTPPTFELFLKNDALGDPFINESHVQAFGWATPEQLAQMKTYSFKVNEVLNKLFDDAGLLLVDFKLEFGLFHGQIVLGDEFSPDGCRLWDKETRKKMDKDRFRQGLGDVIEAYEEVAKRLGVPL</sequence>
<name>PUR7_PSEAE</name>
<organism>
    <name type="scientific">Pseudomonas aeruginosa (strain ATCC 15692 / DSM 22644 / CIP 104116 / JCM 14847 / LMG 12228 / 1C / PRS 101 / PAO1)</name>
    <dbReference type="NCBI Taxonomy" id="208964"/>
    <lineage>
        <taxon>Bacteria</taxon>
        <taxon>Pseudomonadati</taxon>
        <taxon>Pseudomonadota</taxon>
        <taxon>Gammaproteobacteria</taxon>
        <taxon>Pseudomonadales</taxon>
        <taxon>Pseudomonadaceae</taxon>
        <taxon>Pseudomonas</taxon>
    </lineage>
</organism>
<evidence type="ECO:0000255" key="1">
    <source>
        <dbReference type="HAMAP-Rule" id="MF_00137"/>
    </source>
</evidence>
<dbReference type="EC" id="6.3.2.6" evidence="1"/>
<dbReference type="EMBL" id="AE004091">
    <property type="protein sequence ID" value="AAG04402.1"/>
    <property type="molecule type" value="Genomic_DNA"/>
</dbReference>
<dbReference type="PIR" id="F83520">
    <property type="entry name" value="F83520"/>
</dbReference>
<dbReference type="RefSeq" id="NP_249704.1">
    <property type="nucleotide sequence ID" value="NC_002516.2"/>
</dbReference>
<dbReference type="RefSeq" id="WP_003108622.1">
    <property type="nucleotide sequence ID" value="NZ_QZGE01000006.1"/>
</dbReference>
<dbReference type="SMR" id="Q9I4W0"/>
<dbReference type="FunCoup" id="Q9I4W0">
    <property type="interactions" value="648"/>
</dbReference>
<dbReference type="STRING" id="208964.PA1013"/>
<dbReference type="PaxDb" id="208964-PA1013"/>
<dbReference type="GeneID" id="881642"/>
<dbReference type="KEGG" id="pae:PA1013"/>
<dbReference type="PATRIC" id="fig|208964.12.peg.1045"/>
<dbReference type="PseudoCAP" id="PA1013"/>
<dbReference type="HOGENOM" id="CLU_061495_2_0_6"/>
<dbReference type="InParanoid" id="Q9I4W0"/>
<dbReference type="OrthoDB" id="9801549at2"/>
<dbReference type="PhylomeDB" id="Q9I4W0"/>
<dbReference type="BioCyc" id="PAER208964:G1FZ6-1032-MONOMER"/>
<dbReference type="UniPathway" id="UPA00074">
    <property type="reaction ID" value="UER00131"/>
</dbReference>
<dbReference type="Proteomes" id="UP000002438">
    <property type="component" value="Chromosome"/>
</dbReference>
<dbReference type="GO" id="GO:0005829">
    <property type="term" value="C:cytosol"/>
    <property type="evidence" value="ECO:0000318"/>
    <property type="project" value="GO_Central"/>
</dbReference>
<dbReference type="GO" id="GO:0005524">
    <property type="term" value="F:ATP binding"/>
    <property type="evidence" value="ECO:0007669"/>
    <property type="project" value="UniProtKB-KW"/>
</dbReference>
<dbReference type="GO" id="GO:0004639">
    <property type="term" value="F:phosphoribosylaminoimidazolesuccinocarboxamide synthase activity"/>
    <property type="evidence" value="ECO:0000318"/>
    <property type="project" value="GO_Central"/>
</dbReference>
<dbReference type="GO" id="GO:0006189">
    <property type="term" value="P:'de novo' IMP biosynthetic process"/>
    <property type="evidence" value="ECO:0007669"/>
    <property type="project" value="UniProtKB-UniRule"/>
</dbReference>
<dbReference type="GO" id="GO:0009236">
    <property type="term" value="P:cobalamin biosynthetic process"/>
    <property type="evidence" value="ECO:0007669"/>
    <property type="project" value="InterPro"/>
</dbReference>
<dbReference type="CDD" id="cd01415">
    <property type="entry name" value="SAICAR_synt_PurC"/>
    <property type="match status" value="1"/>
</dbReference>
<dbReference type="FunFam" id="3.30.200.20:FF:000086">
    <property type="entry name" value="Phosphoribosylaminoimidazole-succinocarboxamide synthase"/>
    <property type="match status" value="1"/>
</dbReference>
<dbReference type="FunFam" id="3.30.470.20:FF:000006">
    <property type="entry name" value="Phosphoribosylaminoimidazole-succinocarboxamide synthase"/>
    <property type="match status" value="1"/>
</dbReference>
<dbReference type="Gene3D" id="3.30.470.20">
    <property type="entry name" value="ATP-grasp fold, B domain"/>
    <property type="match status" value="1"/>
</dbReference>
<dbReference type="Gene3D" id="3.30.200.20">
    <property type="entry name" value="Phosphorylase Kinase, domain 1"/>
    <property type="match status" value="1"/>
</dbReference>
<dbReference type="HAMAP" id="MF_00137">
    <property type="entry name" value="SAICAR_synth"/>
    <property type="match status" value="1"/>
</dbReference>
<dbReference type="InterPro" id="IPR028923">
    <property type="entry name" value="SAICAR_synt/ADE2_N"/>
</dbReference>
<dbReference type="InterPro" id="IPR033934">
    <property type="entry name" value="SAICAR_synt_PurC"/>
</dbReference>
<dbReference type="InterPro" id="IPR001636">
    <property type="entry name" value="SAICAR_synth"/>
</dbReference>
<dbReference type="InterPro" id="IPR050089">
    <property type="entry name" value="SAICAR_synthetase"/>
</dbReference>
<dbReference type="InterPro" id="IPR018236">
    <property type="entry name" value="SAICAR_synthetase_CS"/>
</dbReference>
<dbReference type="NCBIfam" id="TIGR00081">
    <property type="entry name" value="purC"/>
    <property type="match status" value="1"/>
</dbReference>
<dbReference type="PANTHER" id="PTHR43599">
    <property type="entry name" value="MULTIFUNCTIONAL PROTEIN ADE2"/>
    <property type="match status" value="1"/>
</dbReference>
<dbReference type="PANTHER" id="PTHR43599:SF3">
    <property type="entry name" value="SI:DKEY-6E2.2"/>
    <property type="match status" value="1"/>
</dbReference>
<dbReference type="Pfam" id="PF01259">
    <property type="entry name" value="SAICAR_synt"/>
    <property type="match status" value="1"/>
</dbReference>
<dbReference type="SUPFAM" id="SSF56104">
    <property type="entry name" value="SAICAR synthase-like"/>
    <property type="match status" value="1"/>
</dbReference>
<dbReference type="PROSITE" id="PS01057">
    <property type="entry name" value="SAICAR_SYNTHETASE_1"/>
    <property type="match status" value="1"/>
</dbReference>
<dbReference type="PROSITE" id="PS01058">
    <property type="entry name" value="SAICAR_SYNTHETASE_2"/>
    <property type="match status" value="1"/>
</dbReference>